<gene>
    <name evidence="1" type="primary">rnhB</name>
    <name type="ordered locus">Shewmr7_2694</name>
</gene>
<proteinExistence type="inferred from homology"/>
<feature type="chain" id="PRO_1000031204" description="Ribonuclease HII">
    <location>
        <begin position="1"/>
        <end position="209"/>
    </location>
</feature>
<feature type="domain" description="RNase H type-2" evidence="2">
    <location>
        <begin position="18"/>
        <end position="209"/>
    </location>
</feature>
<feature type="binding site" evidence="1">
    <location>
        <position position="24"/>
    </location>
    <ligand>
        <name>a divalent metal cation</name>
        <dbReference type="ChEBI" id="CHEBI:60240"/>
    </ligand>
</feature>
<feature type="binding site" evidence="1">
    <location>
        <position position="25"/>
    </location>
    <ligand>
        <name>a divalent metal cation</name>
        <dbReference type="ChEBI" id="CHEBI:60240"/>
    </ligand>
</feature>
<feature type="binding site" evidence="1">
    <location>
        <position position="116"/>
    </location>
    <ligand>
        <name>a divalent metal cation</name>
        <dbReference type="ChEBI" id="CHEBI:60240"/>
    </ligand>
</feature>
<dbReference type="EC" id="3.1.26.4" evidence="1"/>
<dbReference type="EMBL" id="CP000444">
    <property type="protein sequence ID" value="ABI43679.1"/>
    <property type="molecule type" value="Genomic_DNA"/>
</dbReference>
<dbReference type="SMR" id="Q0HT76"/>
<dbReference type="KEGG" id="shm:Shewmr7_2694"/>
<dbReference type="HOGENOM" id="CLU_036532_3_2_6"/>
<dbReference type="GO" id="GO:0005737">
    <property type="term" value="C:cytoplasm"/>
    <property type="evidence" value="ECO:0007669"/>
    <property type="project" value="UniProtKB-SubCell"/>
</dbReference>
<dbReference type="GO" id="GO:0032299">
    <property type="term" value="C:ribonuclease H2 complex"/>
    <property type="evidence" value="ECO:0007669"/>
    <property type="project" value="TreeGrafter"/>
</dbReference>
<dbReference type="GO" id="GO:0030145">
    <property type="term" value="F:manganese ion binding"/>
    <property type="evidence" value="ECO:0007669"/>
    <property type="project" value="UniProtKB-UniRule"/>
</dbReference>
<dbReference type="GO" id="GO:0003723">
    <property type="term" value="F:RNA binding"/>
    <property type="evidence" value="ECO:0007669"/>
    <property type="project" value="InterPro"/>
</dbReference>
<dbReference type="GO" id="GO:0004523">
    <property type="term" value="F:RNA-DNA hybrid ribonuclease activity"/>
    <property type="evidence" value="ECO:0007669"/>
    <property type="project" value="UniProtKB-UniRule"/>
</dbReference>
<dbReference type="GO" id="GO:0043137">
    <property type="term" value="P:DNA replication, removal of RNA primer"/>
    <property type="evidence" value="ECO:0007669"/>
    <property type="project" value="TreeGrafter"/>
</dbReference>
<dbReference type="GO" id="GO:0006298">
    <property type="term" value="P:mismatch repair"/>
    <property type="evidence" value="ECO:0007669"/>
    <property type="project" value="TreeGrafter"/>
</dbReference>
<dbReference type="CDD" id="cd07182">
    <property type="entry name" value="RNase_HII_bacteria_HII_like"/>
    <property type="match status" value="1"/>
</dbReference>
<dbReference type="FunFam" id="3.30.420.10:FF:000006">
    <property type="entry name" value="Ribonuclease HII"/>
    <property type="match status" value="1"/>
</dbReference>
<dbReference type="Gene3D" id="3.30.420.10">
    <property type="entry name" value="Ribonuclease H-like superfamily/Ribonuclease H"/>
    <property type="match status" value="1"/>
</dbReference>
<dbReference type="HAMAP" id="MF_00052_B">
    <property type="entry name" value="RNase_HII_B"/>
    <property type="match status" value="1"/>
</dbReference>
<dbReference type="InterPro" id="IPR022898">
    <property type="entry name" value="RNase_HII"/>
</dbReference>
<dbReference type="InterPro" id="IPR001352">
    <property type="entry name" value="RNase_HII/HIII"/>
</dbReference>
<dbReference type="InterPro" id="IPR024567">
    <property type="entry name" value="RNase_HII/HIII_dom"/>
</dbReference>
<dbReference type="InterPro" id="IPR012337">
    <property type="entry name" value="RNaseH-like_sf"/>
</dbReference>
<dbReference type="InterPro" id="IPR036397">
    <property type="entry name" value="RNaseH_sf"/>
</dbReference>
<dbReference type="NCBIfam" id="NF000594">
    <property type="entry name" value="PRK00015.1-1"/>
    <property type="match status" value="1"/>
</dbReference>
<dbReference type="NCBIfam" id="NF000595">
    <property type="entry name" value="PRK00015.1-3"/>
    <property type="match status" value="1"/>
</dbReference>
<dbReference type="NCBIfam" id="NF000596">
    <property type="entry name" value="PRK00015.1-4"/>
    <property type="match status" value="1"/>
</dbReference>
<dbReference type="PANTHER" id="PTHR10954">
    <property type="entry name" value="RIBONUCLEASE H2 SUBUNIT A"/>
    <property type="match status" value="1"/>
</dbReference>
<dbReference type="PANTHER" id="PTHR10954:SF18">
    <property type="entry name" value="RIBONUCLEASE HII"/>
    <property type="match status" value="1"/>
</dbReference>
<dbReference type="Pfam" id="PF01351">
    <property type="entry name" value="RNase_HII"/>
    <property type="match status" value="1"/>
</dbReference>
<dbReference type="SUPFAM" id="SSF53098">
    <property type="entry name" value="Ribonuclease H-like"/>
    <property type="match status" value="1"/>
</dbReference>
<dbReference type="PROSITE" id="PS51975">
    <property type="entry name" value="RNASE_H_2"/>
    <property type="match status" value="1"/>
</dbReference>
<protein>
    <recommendedName>
        <fullName evidence="1">Ribonuclease HII</fullName>
        <shortName evidence="1">RNase HII</shortName>
        <ecNumber evidence="1">3.1.26.4</ecNumber>
    </recommendedName>
</protein>
<organism>
    <name type="scientific">Shewanella sp. (strain MR-7)</name>
    <dbReference type="NCBI Taxonomy" id="60481"/>
    <lineage>
        <taxon>Bacteria</taxon>
        <taxon>Pseudomonadati</taxon>
        <taxon>Pseudomonadota</taxon>
        <taxon>Gammaproteobacteria</taxon>
        <taxon>Alteromonadales</taxon>
        <taxon>Shewanellaceae</taxon>
        <taxon>Shewanella</taxon>
    </lineage>
</organism>
<accession>Q0HT76</accession>
<evidence type="ECO:0000255" key="1">
    <source>
        <dbReference type="HAMAP-Rule" id="MF_00052"/>
    </source>
</evidence>
<evidence type="ECO:0000255" key="2">
    <source>
        <dbReference type="PROSITE-ProRule" id="PRU01319"/>
    </source>
</evidence>
<keyword id="KW-0963">Cytoplasm</keyword>
<keyword id="KW-0255">Endonuclease</keyword>
<keyword id="KW-0378">Hydrolase</keyword>
<keyword id="KW-0464">Manganese</keyword>
<keyword id="KW-0479">Metal-binding</keyword>
<keyword id="KW-0540">Nuclease</keyword>
<sequence length="209" mass="22454">MAVFKTLTDADMAIFSTGLVAGVDEVGRGPLVGDVVTAAVILDPNRPIAGLNDSKKLTEKRREALFDEICEKALSFHVGRASPAEIDELNILHATMLAMQRAVAGLSLTPELVLVDGNRSPAFNHAGQALTSHSIVKGDGLIASISAASIIAKVTRDREMDALDAAYPQYGFAKHKGYPTKAHFDAIAEHGVFDQYRKSFKPVKALLER</sequence>
<comment type="function">
    <text evidence="1">Endonuclease that specifically degrades the RNA of RNA-DNA hybrids.</text>
</comment>
<comment type="catalytic activity">
    <reaction evidence="1">
        <text>Endonucleolytic cleavage to 5'-phosphomonoester.</text>
        <dbReference type="EC" id="3.1.26.4"/>
    </reaction>
</comment>
<comment type="cofactor">
    <cofactor evidence="1">
        <name>Mn(2+)</name>
        <dbReference type="ChEBI" id="CHEBI:29035"/>
    </cofactor>
    <cofactor evidence="1">
        <name>Mg(2+)</name>
        <dbReference type="ChEBI" id="CHEBI:18420"/>
    </cofactor>
    <text evidence="1">Manganese or magnesium. Binds 1 divalent metal ion per monomer in the absence of substrate. May bind a second metal ion after substrate binding.</text>
</comment>
<comment type="subcellular location">
    <subcellularLocation>
        <location evidence="1">Cytoplasm</location>
    </subcellularLocation>
</comment>
<comment type="similarity">
    <text evidence="1">Belongs to the RNase HII family.</text>
</comment>
<reference key="1">
    <citation type="submission" date="2006-08" db="EMBL/GenBank/DDBJ databases">
        <title>Complete sequence of chromosome 1 of Shewanella sp. MR-7.</title>
        <authorList>
            <person name="Copeland A."/>
            <person name="Lucas S."/>
            <person name="Lapidus A."/>
            <person name="Barry K."/>
            <person name="Detter J.C."/>
            <person name="Glavina del Rio T."/>
            <person name="Hammon N."/>
            <person name="Israni S."/>
            <person name="Dalin E."/>
            <person name="Tice H."/>
            <person name="Pitluck S."/>
            <person name="Kiss H."/>
            <person name="Brettin T."/>
            <person name="Bruce D."/>
            <person name="Han C."/>
            <person name="Tapia R."/>
            <person name="Gilna P."/>
            <person name="Schmutz J."/>
            <person name="Larimer F."/>
            <person name="Land M."/>
            <person name="Hauser L."/>
            <person name="Kyrpides N."/>
            <person name="Mikhailova N."/>
            <person name="Nealson K."/>
            <person name="Konstantinidis K."/>
            <person name="Klappenbach J."/>
            <person name="Tiedje J."/>
            <person name="Richardson P."/>
        </authorList>
    </citation>
    <scope>NUCLEOTIDE SEQUENCE [LARGE SCALE GENOMIC DNA]</scope>
    <source>
        <strain>MR-7</strain>
    </source>
</reference>
<name>RNH2_SHESR</name>